<keyword id="KW-1003">Cell membrane</keyword>
<keyword id="KW-1015">Disulfide bond</keyword>
<keyword id="KW-0297">G-protein coupled receptor</keyword>
<keyword id="KW-0325">Glycoprotein</keyword>
<keyword id="KW-0472">Membrane</keyword>
<keyword id="KW-0552">Olfaction</keyword>
<keyword id="KW-0675">Receptor</keyword>
<keyword id="KW-1185">Reference proteome</keyword>
<keyword id="KW-0716">Sensory transduction</keyword>
<keyword id="KW-0807">Transducer</keyword>
<keyword id="KW-0812">Transmembrane</keyword>
<keyword id="KW-1133">Transmembrane helix</keyword>
<accession>Q8VFL9</accession>
<organism>
    <name type="scientific">Mus musculus</name>
    <name type="common">Mouse</name>
    <dbReference type="NCBI Taxonomy" id="10090"/>
    <lineage>
        <taxon>Eukaryota</taxon>
        <taxon>Metazoa</taxon>
        <taxon>Chordata</taxon>
        <taxon>Craniata</taxon>
        <taxon>Vertebrata</taxon>
        <taxon>Euteleostomi</taxon>
        <taxon>Mammalia</taxon>
        <taxon>Eutheria</taxon>
        <taxon>Euarchontoglires</taxon>
        <taxon>Glires</taxon>
        <taxon>Rodentia</taxon>
        <taxon>Myomorpha</taxon>
        <taxon>Muroidea</taxon>
        <taxon>Muridae</taxon>
        <taxon>Murinae</taxon>
        <taxon>Mus</taxon>
        <taxon>Mus</taxon>
    </lineage>
</organism>
<protein>
    <recommendedName>
        <fullName evidence="3">Olfactory receptor 5T7</fullName>
    </recommendedName>
    <alternativeName>
        <fullName>Olfactory receptor 1086</fullName>
    </alternativeName>
    <alternativeName>
        <fullName>Olfactory receptor 179-2</fullName>
    </alternativeName>
</protein>
<gene>
    <name evidence="4" type="primary">Or5t7</name>
    <name evidence="4" type="synonym">Mor179-2</name>
    <name evidence="4" type="synonym">Olfr1086</name>
</gene>
<comment type="function">
    <text>Potential odorant receptor.</text>
</comment>
<comment type="subcellular location">
    <subcellularLocation>
        <location evidence="3">Cell membrane</location>
        <topology evidence="1">Multi-pass membrane protein</topology>
    </subcellularLocation>
</comment>
<comment type="similarity">
    <text evidence="2">Belongs to the G-protein coupled receptor 1 family.</text>
</comment>
<feature type="chain" id="PRO_0000150866" description="Olfactory receptor 5T7">
    <location>
        <begin position="1"/>
        <end position="310"/>
    </location>
</feature>
<feature type="topological domain" description="Extracellular" evidence="1">
    <location>
        <begin position="1"/>
        <end position="23"/>
    </location>
</feature>
<feature type="transmembrane region" description="Helical; Name=1" evidence="1">
    <location>
        <begin position="24"/>
        <end position="44"/>
    </location>
</feature>
<feature type="topological domain" description="Cytoplasmic" evidence="1">
    <location>
        <begin position="45"/>
        <end position="52"/>
    </location>
</feature>
<feature type="transmembrane region" description="Helical; Name=2" evidence="1">
    <location>
        <begin position="53"/>
        <end position="73"/>
    </location>
</feature>
<feature type="topological domain" description="Extracellular" evidence="1">
    <location>
        <begin position="74"/>
        <end position="97"/>
    </location>
</feature>
<feature type="transmembrane region" description="Helical; Name=3" evidence="1">
    <location>
        <begin position="98"/>
        <end position="118"/>
    </location>
</feature>
<feature type="topological domain" description="Cytoplasmic" evidence="1">
    <location>
        <begin position="119"/>
        <end position="131"/>
    </location>
</feature>
<feature type="transmembrane region" description="Helical; Name=4" evidence="1">
    <location>
        <begin position="132"/>
        <end position="152"/>
    </location>
</feature>
<feature type="topological domain" description="Extracellular" evidence="1">
    <location>
        <begin position="153"/>
        <end position="194"/>
    </location>
</feature>
<feature type="transmembrane region" description="Helical; Name=5" evidence="1">
    <location>
        <begin position="195"/>
        <end position="215"/>
    </location>
</feature>
<feature type="topological domain" description="Cytoplasmic" evidence="1">
    <location>
        <begin position="216"/>
        <end position="235"/>
    </location>
</feature>
<feature type="transmembrane region" description="Helical; Name=6" evidence="1">
    <location>
        <begin position="236"/>
        <end position="256"/>
    </location>
</feature>
<feature type="topological domain" description="Extracellular" evidence="1">
    <location>
        <begin position="257"/>
        <end position="269"/>
    </location>
</feature>
<feature type="transmembrane region" description="Helical; Name=7" evidence="1">
    <location>
        <begin position="270"/>
        <end position="290"/>
    </location>
</feature>
<feature type="topological domain" description="Cytoplasmic" evidence="1">
    <location>
        <begin position="291"/>
        <end position="310"/>
    </location>
</feature>
<feature type="glycosylation site" description="N-linked (GlcNAc...) asparagine" evidence="1">
    <location>
        <position position="3"/>
    </location>
</feature>
<feature type="disulfide bond" evidence="2">
    <location>
        <begin position="95"/>
        <end position="187"/>
    </location>
</feature>
<name>OR5T7_MOUSE</name>
<dbReference type="EMBL" id="AY073505">
    <property type="protein sequence ID" value="AAL61168.1"/>
    <property type="molecule type" value="Genomic_DNA"/>
</dbReference>
<dbReference type="EMBL" id="AY318282">
    <property type="protein sequence ID" value="AAP71514.1"/>
    <property type="molecule type" value="Genomic_DNA"/>
</dbReference>
<dbReference type="CCDS" id="CCDS16264.1"/>
<dbReference type="RefSeq" id="NP_666803.1">
    <property type="nucleotide sequence ID" value="NM_146592.2"/>
</dbReference>
<dbReference type="SMR" id="Q8VFL9"/>
<dbReference type="FunCoup" id="Q8VFL9">
    <property type="interactions" value="1131"/>
</dbReference>
<dbReference type="STRING" id="10090.ENSMUSP00000150094"/>
<dbReference type="GlyCosmos" id="Q8VFL9">
    <property type="glycosylation" value="1 site, No reported glycans"/>
</dbReference>
<dbReference type="GlyGen" id="Q8VFL9">
    <property type="glycosylation" value="1 site"/>
</dbReference>
<dbReference type="PaxDb" id="10090-ENSMUSP00000097463"/>
<dbReference type="Ensembl" id="ENSMUST00000099878.2">
    <property type="protein sequence ID" value="ENSMUSP00000097463.2"/>
    <property type="gene ID" value="ENSMUSG00000075175.3"/>
</dbReference>
<dbReference type="Ensembl" id="ENSMUST00000213198.2">
    <property type="protein sequence ID" value="ENSMUSP00000150094.2"/>
    <property type="gene ID" value="ENSMUSG00000075175.3"/>
</dbReference>
<dbReference type="GeneID" id="258585"/>
<dbReference type="KEGG" id="mmu:258585"/>
<dbReference type="UCSC" id="uc008kmt.1">
    <property type="organism name" value="mouse"/>
</dbReference>
<dbReference type="AGR" id="MGI:3030920"/>
<dbReference type="CTD" id="258585"/>
<dbReference type="MGI" id="MGI:3030920">
    <property type="gene designation" value="Or5t7"/>
</dbReference>
<dbReference type="VEuPathDB" id="HostDB:ENSMUSG00000075175"/>
<dbReference type="eggNOG" id="ENOG502SHA3">
    <property type="taxonomic scope" value="Eukaryota"/>
</dbReference>
<dbReference type="GeneTree" id="ENSGT00940000153301"/>
<dbReference type="HOGENOM" id="CLU_012526_1_0_1"/>
<dbReference type="InParanoid" id="Q8VFL9"/>
<dbReference type="OMA" id="TAVSIFH"/>
<dbReference type="OrthoDB" id="9827639at2759"/>
<dbReference type="PhylomeDB" id="Q8VFL9"/>
<dbReference type="TreeFam" id="TF352753"/>
<dbReference type="BioGRID-ORCS" id="258585">
    <property type="hits" value="4 hits in 71 CRISPR screens"/>
</dbReference>
<dbReference type="PRO" id="PR:Q8VFL9"/>
<dbReference type="Proteomes" id="UP000000589">
    <property type="component" value="Chromosome 2"/>
</dbReference>
<dbReference type="RNAct" id="Q8VFL9">
    <property type="molecule type" value="protein"/>
</dbReference>
<dbReference type="GO" id="GO:0016020">
    <property type="term" value="C:membrane"/>
    <property type="evidence" value="ECO:0000247"/>
    <property type="project" value="MGI"/>
</dbReference>
<dbReference type="GO" id="GO:0005886">
    <property type="term" value="C:plasma membrane"/>
    <property type="evidence" value="ECO:0007669"/>
    <property type="project" value="UniProtKB-SubCell"/>
</dbReference>
<dbReference type="GO" id="GO:0004930">
    <property type="term" value="F:G protein-coupled receptor activity"/>
    <property type="evidence" value="ECO:0007669"/>
    <property type="project" value="UniProtKB-KW"/>
</dbReference>
<dbReference type="GO" id="GO:0004984">
    <property type="term" value="F:olfactory receptor activity"/>
    <property type="evidence" value="ECO:0000247"/>
    <property type="project" value="MGI"/>
</dbReference>
<dbReference type="GO" id="GO:0007186">
    <property type="term" value="P:G protein-coupled receptor signaling pathway"/>
    <property type="evidence" value="ECO:0000247"/>
    <property type="project" value="MGI"/>
</dbReference>
<dbReference type="GO" id="GO:0007608">
    <property type="term" value="P:sensory perception of smell"/>
    <property type="evidence" value="ECO:0000247"/>
    <property type="project" value="MGI"/>
</dbReference>
<dbReference type="CDD" id="cd15230">
    <property type="entry name" value="7tmA_OR5-like"/>
    <property type="match status" value="1"/>
</dbReference>
<dbReference type="FunFam" id="1.20.1070.10:FF:000004">
    <property type="entry name" value="Olfactory receptor"/>
    <property type="match status" value="1"/>
</dbReference>
<dbReference type="Gene3D" id="1.20.1070.10">
    <property type="entry name" value="Rhodopsin 7-helix transmembrane proteins"/>
    <property type="match status" value="1"/>
</dbReference>
<dbReference type="InterPro" id="IPR000276">
    <property type="entry name" value="GPCR_Rhodpsn"/>
</dbReference>
<dbReference type="InterPro" id="IPR017452">
    <property type="entry name" value="GPCR_Rhodpsn_7TM"/>
</dbReference>
<dbReference type="InterPro" id="IPR000725">
    <property type="entry name" value="Olfact_rcpt"/>
</dbReference>
<dbReference type="PANTHER" id="PTHR48018">
    <property type="entry name" value="OLFACTORY RECEPTOR"/>
    <property type="match status" value="1"/>
</dbReference>
<dbReference type="Pfam" id="PF13853">
    <property type="entry name" value="7tm_4"/>
    <property type="match status" value="1"/>
</dbReference>
<dbReference type="PRINTS" id="PR00237">
    <property type="entry name" value="GPCRRHODOPSN"/>
</dbReference>
<dbReference type="PRINTS" id="PR00245">
    <property type="entry name" value="OLFACTORYR"/>
</dbReference>
<dbReference type="SUPFAM" id="SSF81321">
    <property type="entry name" value="Family A G protein-coupled receptor-like"/>
    <property type="match status" value="1"/>
</dbReference>
<dbReference type="PROSITE" id="PS00237">
    <property type="entry name" value="G_PROTEIN_RECEP_F1_1"/>
    <property type="match status" value="1"/>
</dbReference>
<dbReference type="PROSITE" id="PS50262">
    <property type="entry name" value="G_PROTEIN_RECEP_F1_2"/>
    <property type="match status" value="1"/>
</dbReference>
<reference key="1">
    <citation type="journal article" date="2002" name="Nat. Neurosci.">
        <title>The olfactory receptor gene superfamily of the mouse.</title>
        <authorList>
            <person name="Zhang X."/>
            <person name="Firestein S."/>
        </authorList>
    </citation>
    <scope>NUCLEOTIDE SEQUENCE [GENOMIC DNA]</scope>
</reference>
<reference key="2">
    <citation type="journal article" date="2002" name="Hum. Mol. Genet.">
        <title>Different evolutionary processes shaped the mouse and human olfactory receptor gene families.</title>
        <authorList>
            <person name="Young J.M."/>
            <person name="Friedman C."/>
            <person name="Williams E.M."/>
            <person name="Ross J.A."/>
            <person name="Tonnes-Priddy L."/>
            <person name="Trask B.J."/>
        </authorList>
    </citation>
    <scope>NUCLEOTIDE SEQUENCE [GENOMIC DNA]</scope>
</reference>
<reference key="3">
    <citation type="journal article" date="2002" name="Hum. Mol. Genet.">
        <authorList>
            <person name="Young J.M."/>
            <person name="Friedman C."/>
            <person name="Williams E.M."/>
            <person name="Ross J.A."/>
            <person name="Tonnes-Priddy L."/>
            <person name="Trask B.J."/>
        </authorList>
    </citation>
    <scope>ERRATUM OF PUBMED:11875048</scope>
</reference>
<evidence type="ECO:0000255" key="1"/>
<evidence type="ECO:0000255" key="2">
    <source>
        <dbReference type="PROSITE-ProRule" id="PRU00521"/>
    </source>
</evidence>
<evidence type="ECO:0000305" key="3"/>
<evidence type="ECO:0000312" key="4">
    <source>
        <dbReference type="MGI" id="MGI:3030920"/>
    </source>
</evidence>
<sequence length="310" mass="34661">MENITEVTEFILMGFTDNADLEILSFFLFLAIYLFTLMGNLGLITLVIGDSRLHNPMYYFLSVLSSVDACYSTVITPQMVVDFVSEKKVISFIGCATQMFLAVTFGTTECFLLAAMAYDRYVAIHNPLMYVVSMSPRVYVPLIIASYAGGILHAVIHTVATFRLSFCGSNKISHIFCDIPPLLAISCSDTHFNQLLLFYCAGFIEVVTILIVLLSYGFILSVILKTRSTEGKRKVFSTCGSHLMAVSTFHGTVLFMYVRPSDSYALEHDMMVSIFYSIVIPMLNPLIYSLRNKDVKEAIKKVFGKRILCG</sequence>
<proteinExistence type="inferred from homology"/>